<protein>
    <recommendedName>
        <fullName>Nuclear receptor subfamily 0 group B member 1</fullName>
    </recommendedName>
    <alternativeName>
        <fullName>DSS-AHC critical region on the X chromosome protein 1</fullName>
    </alternativeName>
    <alternativeName>
        <fullName evidence="27">Nuclear receptor DAX-1</fullName>
    </alternativeName>
</protein>
<dbReference type="EMBL" id="S74720">
    <property type="protein sequence ID" value="AAB32751.1"/>
    <property type="molecule type" value="mRNA"/>
</dbReference>
<dbReference type="EMBL" id="U31929">
    <property type="protein sequence ID" value="AAC13875.1"/>
    <property type="molecule type" value="Genomic_DNA"/>
</dbReference>
<dbReference type="EMBL" id="BC011564">
    <property type="protein sequence ID" value="AAH11564.1"/>
    <property type="molecule type" value="mRNA"/>
</dbReference>
<dbReference type="CCDS" id="CCDS14223.1">
    <molecule id="P51843-1"/>
</dbReference>
<dbReference type="PIR" id="S50854">
    <property type="entry name" value="S50854"/>
</dbReference>
<dbReference type="RefSeq" id="NP_000466.2">
    <molecule id="P51843-1"/>
    <property type="nucleotide sequence ID" value="NM_000475.4"/>
</dbReference>
<dbReference type="RefSeq" id="XP_016884827.1">
    <property type="nucleotide sequence ID" value="XM_017029338.1"/>
</dbReference>
<dbReference type="PDB" id="4RWV">
    <property type="method" value="X-ray"/>
    <property type="resolution" value="1.86 A"/>
    <property type="chains" value="B=140-154"/>
</dbReference>
<dbReference type="PDBsum" id="4RWV"/>
<dbReference type="SMR" id="P51843"/>
<dbReference type="BioGRID" id="106695">
    <property type="interactions" value="21"/>
</dbReference>
<dbReference type="CORUM" id="P51843"/>
<dbReference type="FunCoup" id="P51843">
    <property type="interactions" value="181"/>
</dbReference>
<dbReference type="IntAct" id="P51843">
    <property type="interactions" value="4"/>
</dbReference>
<dbReference type="STRING" id="9606.ENSP00000368253"/>
<dbReference type="BindingDB" id="P51843"/>
<dbReference type="ChEMBL" id="CHEMBL1795094"/>
<dbReference type="DrugBank" id="DB01234">
    <property type="generic name" value="Dexamethasone"/>
</dbReference>
<dbReference type="DrugBank" id="DB14649">
    <property type="generic name" value="Dexamethasone acetate"/>
</dbReference>
<dbReference type="GlyGen" id="P51843">
    <property type="glycosylation" value="2 sites, 1 N-linked glycan (1 site), 1 O-linked glycan (1 site)"/>
</dbReference>
<dbReference type="iPTMnet" id="P51843"/>
<dbReference type="PhosphoSitePlus" id="P51843"/>
<dbReference type="BioMuta" id="NR0B1"/>
<dbReference type="DMDM" id="20532385"/>
<dbReference type="jPOST" id="P51843"/>
<dbReference type="MassIVE" id="P51843"/>
<dbReference type="PaxDb" id="9606-ENSP00000368253"/>
<dbReference type="PeptideAtlas" id="P51843"/>
<dbReference type="ProteomicsDB" id="56432">
    <molecule id="P51843-1"/>
</dbReference>
<dbReference type="ProteomicsDB" id="56433">
    <molecule id="P51843-2"/>
</dbReference>
<dbReference type="Antibodypedia" id="10329">
    <property type="antibodies" value="632 antibodies from 43 providers"/>
</dbReference>
<dbReference type="DNASU" id="190"/>
<dbReference type="Ensembl" id="ENST00000378970.5">
    <molecule id="P51843-1"/>
    <property type="protein sequence ID" value="ENSP00000368253.4"/>
    <property type="gene ID" value="ENSG00000169297.8"/>
</dbReference>
<dbReference type="GeneID" id="190"/>
<dbReference type="KEGG" id="hsa:190"/>
<dbReference type="MANE-Select" id="ENST00000378970.5">
    <property type="protein sequence ID" value="ENSP00000368253.4"/>
    <property type="RefSeq nucleotide sequence ID" value="NM_000475.5"/>
    <property type="RefSeq protein sequence ID" value="NP_000466.2"/>
</dbReference>
<dbReference type="UCSC" id="uc004dcf.5">
    <molecule id="P51843-1"/>
    <property type="organism name" value="human"/>
</dbReference>
<dbReference type="AGR" id="HGNC:7960"/>
<dbReference type="CTD" id="190"/>
<dbReference type="DisGeNET" id="190"/>
<dbReference type="GeneCards" id="NR0B1"/>
<dbReference type="GeneReviews" id="NR0B1"/>
<dbReference type="HGNC" id="HGNC:7960">
    <property type="gene designation" value="NR0B1"/>
</dbReference>
<dbReference type="HPA" id="ENSG00000169297">
    <property type="expression patterns" value="Group enriched (adrenal gland, testis)"/>
</dbReference>
<dbReference type="MalaCards" id="NR0B1"/>
<dbReference type="MIM" id="300018">
    <property type="type" value="phenotype"/>
</dbReference>
<dbReference type="MIM" id="300200">
    <property type="type" value="phenotype"/>
</dbReference>
<dbReference type="MIM" id="300473">
    <property type="type" value="gene"/>
</dbReference>
<dbReference type="neXtProt" id="NX_P51843"/>
<dbReference type="OpenTargets" id="ENSG00000169297"/>
<dbReference type="Orphanet" id="393">
    <property type="disease" value="46,XX testicular difference of sex development"/>
</dbReference>
<dbReference type="Orphanet" id="242">
    <property type="disease" value="46,XY complete gonadal dysgenesis"/>
</dbReference>
<dbReference type="Orphanet" id="251510">
    <property type="disease" value="46,XY partial gonadal dysgenesis"/>
</dbReference>
<dbReference type="Orphanet" id="95702">
    <property type="disease" value="X-linked adrenal hypoplasia congenita"/>
</dbReference>
<dbReference type="PharmGKB" id="PA31746"/>
<dbReference type="VEuPathDB" id="HostDB:ENSG00000169297"/>
<dbReference type="eggNOG" id="KOG3575">
    <property type="taxonomic scope" value="Eukaryota"/>
</dbReference>
<dbReference type="GeneTree" id="ENSGT00390000015719"/>
<dbReference type="HOGENOM" id="CLU_674314_0_0_1"/>
<dbReference type="InParanoid" id="P51843"/>
<dbReference type="OMA" id="ACWGCSC"/>
<dbReference type="OrthoDB" id="9926883at2759"/>
<dbReference type="PAN-GO" id="P51843">
    <property type="GO annotations" value="9 GO annotations based on evolutionary models"/>
</dbReference>
<dbReference type="PhylomeDB" id="P51843"/>
<dbReference type="TreeFam" id="TF332386"/>
<dbReference type="PathwayCommons" id="P51843"/>
<dbReference type="Reactome" id="R-HSA-383280">
    <property type="pathway name" value="Nuclear Receptor transcription pathway"/>
</dbReference>
<dbReference type="SignaLink" id="P51843"/>
<dbReference type="SIGNOR" id="P51843"/>
<dbReference type="BioGRID-ORCS" id="190">
    <property type="hits" value="9 hits in 791 CRISPR screens"/>
</dbReference>
<dbReference type="GeneWiki" id="DAX1"/>
<dbReference type="GenomeRNAi" id="190"/>
<dbReference type="Pharos" id="P51843">
    <property type="development level" value="Tbio"/>
</dbReference>
<dbReference type="PRO" id="PR:P51843"/>
<dbReference type="Proteomes" id="UP000005640">
    <property type="component" value="Chromosome X"/>
</dbReference>
<dbReference type="RNAct" id="P51843">
    <property type="molecule type" value="protein"/>
</dbReference>
<dbReference type="Bgee" id="ENSG00000169297">
    <property type="expression patterns" value="Expressed in right adrenal gland and 101 other cell types or tissues"/>
</dbReference>
<dbReference type="ExpressionAtlas" id="P51843">
    <property type="expression patterns" value="baseline and differential"/>
</dbReference>
<dbReference type="GO" id="GO:0034451">
    <property type="term" value="C:centriolar satellite"/>
    <property type="evidence" value="ECO:0000314"/>
    <property type="project" value="HPA"/>
</dbReference>
<dbReference type="GO" id="GO:0000785">
    <property type="term" value="C:chromatin"/>
    <property type="evidence" value="ECO:0000247"/>
    <property type="project" value="NTNU_SB"/>
</dbReference>
<dbReference type="GO" id="GO:0005737">
    <property type="term" value="C:cytoplasm"/>
    <property type="evidence" value="ECO:0000314"/>
    <property type="project" value="UniProtKB"/>
</dbReference>
<dbReference type="GO" id="GO:0043231">
    <property type="term" value="C:intracellular membrane-bounded organelle"/>
    <property type="evidence" value="ECO:0000314"/>
    <property type="project" value="HPA"/>
</dbReference>
<dbReference type="GO" id="GO:0016020">
    <property type="term" value="C:membrane"/>
    <property type="evidence" value="ECO:0000314"/>
    <property type="project" value="BHF-UCL"/>
</dbReference>
<dbReference type="GO" id="GO:0016607">
    <property type="term" value="C:nuclear speck"/>
    <property type="evidence" value="ECO:0000314"/>
    <property type="project" value="HPA"/>
</dbReference>
<dbReference type="GO" id="GO:0005654">
    <property type="term" value="C:nucleoplasm"/>
    <property type="evidence" value="ECO:0000314"/>
    <property type="project" value="HPA"/>
</dbReference>
<dbReference type="GO" id="GO:0005634">
    <property type="term" value="C:nucleus"/>
    <property type="evidence" value="ECO:0000314"/>
    <property type="project" value="UniProtKB"/>
</dbReference>
<dbReference type="GO" id="GO:0005840">
    <property type="term" value="C:ribosome"/>
    <property type="evidence" value="ECO:0000314"/>
    <property type="project" value="HGNC-UCL"/>
</dbReference>
<dbReference type="GO" id="GO:0050682">
    <property type="term" value="F:AF-2 domain binding"/>
    <property type="evidence" value="ECO:0000353"/>
    <property type="project" value="UniProtKB"/>
</dbReference>
<dbReference type="GO" id="GO:0032448">
    <property type="term" value="F:DNA hairpin binding"/>
    <property type="evidence" value="ECO:0000314"/>
    <property type="project" value="HGNC-UCL"/>
</dbReference>
<dbReference type="GO" id="GO:0016922">
    <property type="term" value="F:nuclear receptor binding"/>
    <property type="evidence" value="ECO:0000353"/>
    <property type="project" value="UniProtKB"/>
</dbReference>
<dbReference type="GO" id="GO:0019904">
    <property type="term" value="F:protein domain specific binding"/>
    <property type="evidence" value="ECO:0000353"/>
    <property type="project" value="UniProtKB"/>
</dbReference>
<dbReference type="GO" id="GO:0042803">
    <property type="term" value="F:protein homodimerization activity"/>
    <property type="evidence" value="ECO:0000353"/>
    <property type="project" value="UniProtKB"/>
</dbReference>
<dbReference type="GO" id="GO:0003723">
    <property type="term" value="F:RNA binding"/>
    <property type="evidence" value="ECO:0000314"/>
    <property type="project" value="HGNC-UCL"/>
</dbReference>
<dbReference type="GO" id="GO:0061629">
    <property type="term" value="F:RNA polymerase II-specific DNA-binding transcription factor binding"/>
    <property type="evidence" value="ECO:0000353"/>
    <property type="project" value="BHF-UCL"/>
</dbReference>
<dbReference type="GO" id="GO:0003714">
    <property type="term" value="F:transcription corepressor activity"/>
    <property type="evidence" value="ECO:0000314"/>
    <property type="project" value="UniProtKB"/>
</dbReference>
<dbReference type="GO" id="GO:0030325">
    <property type="term" value="P:adrenal gland development"/>
    <property type="evidence" value="ECO:0000315"/>
    <property type="project" value="HGNC-UCL"/>
</dbReference>
<dbReference type="GO" id="GO:0035987">
    <property type="term" value="P:endodermal cell differentiation"/>
    <property type="evidence" value="ECO:0007669"/>
    <property type="project" value="Ensembl"/>
</dbReference>
<dbReference type="GO" id="GO:0008406">
    <property type="term" value="P:gonad development"/>
    <property type="evidence" value="ECO:0000315"/>
    <property type="project" value="HGNC-UCL"/>
</dbReference>
<dbReference type="GO" id="GO:0021854">
    <property type="term" value="P:hypothalamus development"/>
    <property type="evidence" value="ECO:0000303"/>
    <property type="project" value="UniProtKB"/>
</dbReference>
<dbReference type="GO" id="GO:0033327">
    <property type="term" value="P:Leydig cell differentiation"/>
    <property type="evidence" value="ECO:0007669"/>
    <property type="project" value="Ensembl"/>
</dbReference>
<dbReference type="GO" id="GO:0008584">
    <property type="term" value="P:male gonad development"/>
    <property type="evidence" value="ECO:0000315"/>
    <property type="project" value="UniProtKB"/>
</dbReference>
<dbReference type="GO" id="GO:0030238">
    <property type="term" value="P:male sex determination"/>
    <property type="evidence" value="ECO:0007669"/>
    <property type="project" value="Ensembl"/>
</dbReference>
<dbReference type="GO" id="GO:0045892">
    <property type="term" value="P:negative regulation of DNA-templated transcription"/>
    <property type="evidence" value="ECO:0000314"/>
    <property type="project" value="HGNC-UCL"/>
</dbReference>
<dbReference type="GO" id="GO:0045721">
    <property type="term" value="P:negative regulation of gluconeogenesis"/>
    <property type="evidence" value="ECO:0000314"/>
    <property type="project" value="BHF-UCL"/>
</dbReference>
<dbReference type="GO" id="GO:0033144">
    <property type="term" value="P:negative regulation of intracellular steroid hormone receptor signaling pathway"/>
    <property type="evidence" value="ECO:0000314"/>
    <property type="project" value="UniProtKB"/>
</dbReference>
<dbReference type="GO" id="GO:0010894">
    <property type="term" value="P:negative regulation of steroid biosynthetic process"/>
    <property type="evidence" value="ECO:0000314"/>
    <property type="project" value="HGNC-UCL"/>
</dbReference>
<dbReference type="GO" id="GO:0000122">
    <property type="term" value="P:negative regulation of transcription by RNA polymerase II"/>
    <property type="evidence" value="ECO:0000315"/>
    <property type="project" value="BHF-UCL"/>
</dbReference>
<dbReference type="GO" id="GO:0021983">
    <property type="term" value="P:pituitary gland development"/>
    <property type="evidence" value="ECO:0000303"/>
    <property type="project" value="UniProtKB"/>
</dbReference>
<dbReference type="GO" id="GO:0008104">
    <property type="term" value="P:protein localization"/>
    <property type="evidence" value="ECO:0000314"/>
    <property type="project" value="UniProtKB"/>
</dbReference>
<dbReference type="GO" id="GO:0035902">
    <property type="term" value="P:response to immobilization stress"/>
    <property type="evidence" value="ECO:0007669"/>
    <property type="project" value="Ensembl"/>
</dbReference>
<dbReference type="GO" id="GO:0060008">
    <property type="term" value="P:Sertoli cell differentiation"/>
    <property type="evidence" value="ECO:0007669"/>
    <property type="project" value="Ensembl"/>
</dbReference>
<dbReference type="GO" id="GO:0007283">
    <property type="term" value="P:spermatogenesis"/>
    <property type="evidence" value="ECO:0000318"/>
    <property type="project" value="GO_Central"/>
</dbReference>
<dbReference type="CDD" id="cd07350">
    <property type="entry name" value="NR_LBD_Dax1"/>
    <property type="match status" value="1"/>
</dbReference>
<dbReference type="FunFam" id="1.10.565.10:FF:000027">
    <property type="entry name" value="nuclear receptor subfamily 0 group B member 1"/>
    <property type="match status" value="1"/>
</dbReference>
<dbReference type="Gene3D" id="1.10.565.10">
    <property type="entry name" value="Retinoid X Receptor"/>
    <property type="match status" value="1"/>
</dbReference>
<dbReference type="InterPro" id="IPR035500">
    <property type="entry name" value="NHR-like_dom_sf"/>
</dbReference>
<dbReference type="InterPro" id="IPR033544">
    <property type="entry name" value="NR0B1/2"/>
</dbReference>
<dbReference type="InterPro" id="IPR000536">
    <property type="entry name" value="Nucl_hrmn_rcpt_lig-bd"/>
</dbReference>
<dbReference type="InterPro" id="IPR001723">
    <property type="entry name" value="Nuclear_hrmn_rcpt"/>
</dbReference>
<dbReference type="InterPro" id="IPR025900">
    <property type="entry name" value="Nuclear_receptor_repeat"/>
</dbReference>
<dbReference type="PANTHER" id="PTHR24081">
    <property type="entry name" value="NUCLEAR RECEPTOR SUBFAMILY 0 GROUP B"/>
    <property type="match status" value="1"/>
</dbReference>
<dbReference type="PANTHER" id="PTHR24081:SF1">
    <property type="entry name" value="NUCLEAR RECEPTOR SUBFAMILY 0 GROUP B MEMBER 1"/>
    <property type="match status" value="1"/>
</dbReference>
<dbReference type="Pfam" id="PF00104">
    <property type="entry name" value="Hormone_recep"/>
    <property type="match status" value="1"/>
</dbReference>
<dbReference type="Pfam" id="PF14046">
    <property type="entry name" value="NR_Repeat"/>
    <property type="match status" value="4"/>
</dbReference>
<dbReference type="PRINTS" id="PR00398">
    <property type="entry name" value="STRDHORMONER"/>
</dbReference>
<dbReference type="SMART" id="SM00430">
    <property type="entry name" value="HOLI"/>
    <property type="match status" value="1"/>
</dbReference>
<dbReference type="SUPFAM" id="SSF48508">
    <property type="entry name" value="Nuclear receptor ligand-binding domain"/>
    <property type="match status" value="1"/>
</dbReference>
<dbReference type="PROSITE" id="PS51843">
    <property type="entry name" value="NR_LBD"/>
    <property type="match status" value="1"/>
</dbReference>
<proteinExistence type="evidence at protein level"/>
<reference key="1">
    <citation type="journal article" date="1994" name="Nature">
        <title>An unusual member of the nuclear hormone receptor superfamily responsible for X-linked adrenal hypoplasia congenita.</title>
        <authorList>
            <person name="Zanaria E."/>
            <person name="Muscatelli F."/>
            <person name="Bardoni B."/>
            <person name="Strom T.M."/>
            <person name="Guioli S."/>
            <person name="Guo W."/>
            <person name="Lalli E."/>
            <person name="Moser C."/>
            <person name="Walker A.P."/>
            <person name="McCabe E.R.B."/>
            <person name="Meitinger T."/>
            <person name="Monaco A.P."/>
            <person name="Sassone-Corsi P."/>
            <person name="Camerino G."/>
        </authorList>
    </citation>
    <scope>NUCLEOTIDE SEQUENCE [MRNA] (ISOFORM 1)</scope>
    <scope>FUNCTION</scope>
</reference>
<reference key="2">
    <citation type="journal article" date="1996" name="J. Clin. Endocrinol. Metab.">
        <title>Genomic sequence of the DAX1 gene: an orphan nuclear receptor responsible for X-linked adrenal hypoplasia congenita and hypogonadotropic hypogonadism.</title>
        <authorList>
            <person name="Guo W."/>
            <person name="Burris T.P."/>
            <person name="Zhang Y.H."/>
            <person name="Huang B.L."/>
            <person name="Mason J."/>
            <person name="Copeland K.C."/>
            <person name="Kupfer S.R."/>
            <person name="Pagon R.A."/>
            <person name="McCabe E.R.B."/>
        </authorList>
    </citation>
    <scope>NUCLEOTIDE SEQUENCE [GENOMIC DNA]</scope>
    <scope>FUNCTION</scope>
</reference>
<reference key="3">
    <citation type="journal article" date="2004" name="Genome Res.">
        <title>The status, quality, and expansion of the NIH full-length cDNA project: the Mammalian Gene Collection (MGC).</title>
        <authorList>
            <consortium name="The MGC Project Team"/>
        </authorList>
    </citation>
    <scope>NUCLEOTIDE SEQUENCE [LARGE SCALE MRNA] (ISOFORM 1)</scope>
    <source>
        <tissue>Lung</tissue>
    </source>
</reference>
<reference key="4">
    <citation type="journal article" date="2000" name="J. Biol. Chem.">
        <title>Interaction of the corepressor Alien with DAX-1 is abrogated by mutations of DAX-1 involved in adrenal hypoplasia congenita.</title>
        <authorList>
            <person name="Altincicek B."/>
            <person name="Tenbaum S.P."/>
            <person name="Dressel U."/>
            <person name="Thormeyer D."/>
            <person name="Renkawitz R."/>
            <person name="Baniahmad A."/>
        </authorList>
    </citation>
    <scope>INTERACTION WITH COPS2</scope>
</reference>
<reference key="5">
    <citation type="journal article" date="2003" name="Mol. Cell. Biol.">
        <title>LXXLL-related motifs in Dax-1 have target specificity for the orphan nuclear receptors Ad4BP/SF-1 and LRH-1.</title>
        <authorList>
            <person name="Suzuki T."/>
            <person name="Kasahara M."/>
            <person name="Yoshioka H."/>
            <person name="Morohashi K."/>
            <person name="Umesono K."/>
        </authorList>
    </citation>
    <scope>INTERACTION WITH NR5A1 AND NR5A2</scope>
    <scope>FUNCTION</scope>
</reference>
<reference key="6">
    <citation type="journal article" date="2004" name="Mol. Genet. Metab.">
        <title>NR0B1A: an alternatively spliced form of NR0B1.</title>
        <authorList>
            <person name="Ho J."/>
            <person name="Zhang Y.H."/>
            <person name="Huang B.L."/>
            <person name="McCabe E.R.B."/>
        </authorList>
    </citation>
    <scope>ALTERNATIVE SPLICING (ISOFORM 2)</scope>
</reference>
<reference key="7">
    <citation type="journal article" date="2005" name="Mol. Genet. Metab.">
        <title>DAX1 origin, function, and novel role.</title>
        <authorList>
            <person name="Niakan K.K."/>
            <person name="McCabe E.R.B."/>
        </authorList>
    </citation>
    <scope>REVIEW</scope>
</reference>
<reference key="8">
    <citation type="journal article" date="2006" name="Mol. Endocrinol.">
        <title>Dosage-sensitive sex reversal adrenal hypoplasia congenita critical region on the X chromosome, gene 1 (DAX1) (NR0B1) and small heterodimer partner (SHP) (NR0B2) form homodimers individually, as well as DAX1-SHP heterodimers.</title>
        <authorList>
            <person name="Iyer A.K."/>
            <person name="Zhang Y.-H."/>
            <person name="McCabe E.R.B."/>
        </authorList>
    </citation>
    <scope>HOMODIMERIZATION</scope>
    <scope>HETERODIMERIZATION WITH NR0B2</scope>
    <scope>SUBCELLULAR LOCATION</scope>
    <scope>MUTAGENESIS OF 16-MET-LEU-17; 83-MET-LEU-84; 149-LEU-LEU-150 AND 461-MET-MET-462</scope>
</reference>
<reference key="9">
    <citation type="journal article" date="2020" name="Structure">
        <title>Integrated structural modeling of full-length LRH-1 reveals inter-domain interactions contribute to receptor structure and function.</title>
        <authorList>
            <person name="Seacrist C.D."/>
            <person name="Kuenze G."/>
            <person name="Hoffmann R.M."/>
            <person name="Moeller B.E."/>
            <person name="Burke J.E."/>
            <person name="Meiler J."/>
            <person name="Blind R.D."/>
        </authorList>
    </citation>
    <scope>FUNCTION</scope>
    <scope>INTERACTION WITH NR5A2</scope>
</reference>
<reference evidence="29" key="10">
    <citation type="journal article" date="2015" name="J. Struct. Biol.">
        <title>Structure of liver receptor homolog-1 (NR5A2) with PIP3 hormone bound in the ligand binding pocket.</title>
        <authorList>
            <person name="Sablin E.P."/>
            <person name="Blind R.D."/>
            <person name="Uthayaruban R."/>
            <person name="Chiu H.J."/>
            <person name="Deacon A.M."/>
            <person name="Das D."/>
            <person name="Ingraham H.A."/>
            <person name="Fletterick R.J."/>
        </authorList>
    </citation>
    <scope>X-RAY CRYSTALLOGRAPHY (1.86 ANGSTROMS) OF 140-154 IN COMPLEX WITH NR5A2</scope>
    <scope>INTERACTION WITH NR5A2</scope>
</reference>
<reference key="11">
    <citation type="journal article" date="1994" name="Nature">
        <title>Mutations in the DAX-1 gene give rise to both X-linked adrenal hypoplasia congenita and hypogonadotropic hypogonadism.</title>
        <authorList>
            <person name="Muscatelli F."/>
            <person name="Strom T.M."/>
            <person name="Walker A.P."/>
            <person name="Zanaria E."/>
            <person name="Recan D."/>
            <person name="Meindl A."/>
            <person name="Bardoni B."/>
            <person name="Guioli S."/>
            <person name="Zehetner G."/>
            <person name="Rabl W."/>
            <person name="Schwarz H.P."/>
            <person name="Kaplan J.-C."/>
            <person name="Camerino G."/>
            <person name="Meitinger T."/>
            <person name="Monaco A.P."/>
        </authorList>
    </citation>
    <scope>VARIANTS AHC PRO-267 AND VAL-269 DEL</scope>
</reference>
<reference key="12">
    <citation type="journal article" date="1997" name="Hum. Genet.">
        <title>X-linked adrenal hypoplasia in a large Greenlandic family. Detection of a missense mutation (N4401) in the DAX-1 gene; implication for genetic counselling and carrier diagnosis.</title>
        <authorList>
            <person name="Schwartz M."/>
            <person name="Blichfeldt S."/>
            <person name="Mueller J."/>
        </authorList>
    </citation>
    <scope>VARIANT AHC ILE-440</scope>
</reference>
<reference key="13">
    <citation type="journal article" date="1997" name="J. Clin. Endocrinol. Metab.">
        <title>Three novel mutations and a de novo deletion mutation of the DAX-1 gene in patients with X-linked adrenal hypoplasia congenita.</title>
        <authorList>
            <person name="Nakae J."/>
            <person name="Abe S."/>
            <person name="Tajima T."/>
            <person name="Shinohara N."/>
            <person name="Murashita M."/>
            <person name="Igarashi Y."/>
            <person name="Kusuda S."/>
            <person name="Suzuki J."/>
            <person name="Fujieda K."/>
        </authorList>
    </citation>
    <scope>VARIANTS AHC CYS-291 AND ASN-382</scope>
</reference>
<reference key="14">
    <citation type="journal article" date="1997" name="J. Pediatr.">
        <title>Active hypothalamic-pituitary-gonadal axis in an infant with X-linked adrenal hypoplasia congenita.</title>
        <authorList>
            <person name="Takahashi T."/>
            <person name="Shoji Y."/>
            <person name="Shoji Y."/>
            <person name="Haraguchi N."/>
            <person name="Takahashi I."/>
            <person name="Takada G."/>
        </authorList>
    </citation>
    <scope>VARIANT AHC VAL-300</scope>
</reference>
<reference key="15">
    <citation type="journal article" date="1997" name="Mol. Endocrinol.">
        <title>A transcriptional silencing domain in DAX-1 whose mutation causes adrenal hypoplasia congenita.</title>
        <authorList>
            <person name="Lalli E."/>
            <person name="Bardoni B."/>
            <person name="Zazopoulos E."/>
            <person name="Wurtz J.-M."/>
            <person name="Strom T.M."/>
            <person name="Moras D."/>
            <person name="Sassone-Corsi P."/>
        </authorList>
    </citation>
    <scope>CHARACTERIZATION OF VARIANTS AHC PRO-267 AND VAL-269 DEL</scope>
</reference>
<reference key="16">
    <citation type="journal article" date="1998" name="Am. J. Hum. Genet.">
        <title>DAX1 mutations map to putative structural domains in a deduced three-dimensional model.</title>
        <authorList>
            <person name="Zhang Y.-H."/>
            <person name="Guo W."/>
            <person name="Wagner R.L."/>
            <person name="Huang B.-L."/>
            <person name="McCabe L.L."/>
            <person name="Vilain E."/>
            <person name="Burris T.P."/>
            <person name="Anyane-Yeboa K."/>
            <person name="Burghes A.H.M."/>
            <person name="Chitayat D."/>
            <person name="Chudley A.E."/>
            <person name="Genel M."/>
            <person name="Gertner J.M."/>
            <person name="Klingensmith G.J."/>
            <person name="Levine S.N."/>
            <person name="Nakamoto J."/>
            <person name="New M.I."/>
            <person name="Pagon R.A."/>
            <person name="Pappas J.G."/>
            <person name="Quigley C.A."/>
            <person name="Rosenthal I.M."/>
            <person name="Baxter J.D."/>
            <person name="Fletterick R.J."/>
            <person name="McCabe E.R.B."/>
        </authorList>
    </citation>
    <scope>VARIANTS AHC LYS-377; GLY-385 AND GLY-425</scope>
</reference>
<reference key="17">
    <citation type="journal article" date="1998" name="Nature">
        <title>Dax1 antagonizes Sry action in mammalian sex determination.</title>
        <authorList>
            <person name="Swain A."/>
            <person name="Narvaez V."/>
            <person name="Burgoyne P."/>
            <person name="Camerino G."/>
            <person name="Lovell-Badge R."/>
        </authorList>
    </citation>
    <scope>INVOLVEMENT IN SRXY2</scope>
</reference>
<reference key="18">
    <citation type="journal article" date="1999" name="Am. J. Med. Genet.">
        <title>Novel missense mutation (Leu466Arg) of the DAX1 gene in a patient with X-linked congenital adrenal hypoplasia.</title>
        <authorList>
            <person name="Abe S."/>
            <person name="Nakae J."/>
            <person name="Yasoshima K."/>
            <person name="Tajima T."/>
            <person name="Shinohara N."/>
            <person name="Murashita M."/>
            <person name="Satoh K."/>
            <person name="Koike A."/>
            <person name="Takahashi Y."/>
            <person name="Fujieda K."/>
        </authorList>
    </citation>
    <scope>VARIANT AHC ARG-466</scope>
</reference>
<reference key="19">
    <citation type="journal article" date="1999" name="Clin. Endocrinol. (Oxf.)">
        <title>Novel DAX1 mutations in X-linked adrenal hypoplasia congenita and hypogonadotrophic hypogonadism.</title>
        <authorList>
            <person name="Bassett J.H.D."/>
            <person name="O'Halloran D.J."/>
            <person name="Williams G.R."/>
            <person name="Beardwell C.G."/>
            <person name="Shalet S.M."/>
            <person name="Thakker R.V."/>
        </authorList>
    </citation>
    <scope>VARIANT AHC PRO-278</scope>
</reference>
<reference key="20">
    <citation type="journal article" date="2000" name="J. Clin. Invest.">
        <title>A novel mutation in DAX1 causes delayed-onset adrenal insufficiency and incomplete hypogonadotropic hypogonadism.</title>
        <authorList>
            <person name="Tabarin A."/>
            <person name="Achermann J.C."/>
            <person name="Recan D."/>
            <person name="Bex V."/>
            <person name="Bertagna X."/>
            <person name="Christin-Maitre S."/>
            <person name="Ito M."/>
            <person name="Jameson J.L."/>
            <person name="Bouchard P."/>
        </authorList>
    </citation>
    <scope>VARIANT AHC SER-439</scope>
</reference>
<reference key="21">
    <citation type="journal article" date="2000" name="J. Pediatr.">
        <title>Presymptomatic diagnosis of X-linked adrenal hypoplasia congenita by analysis of DAX1.</title>
        <authorList>
            <person name="Achermann J.C."/>
            <person name="Silverman B.L."/>
            <person name="Habiby R.L."/>
            <person name="Jameson J.L."/>
        </authorList>
    </citation>
    <scope>VARIANT AHC HIS-381</scope>
</reference>
<reference key="22">
    <citation type="journal article" date="2000" name="Mol. Cell. Biol.">
        <title>Orphan receptor DAX-1 is a shuttling RNA binding protein associated with polyribosomes via mRNA.</title>
        <authorList>
            <person name="Lalli E."/>
            <person name="Ohe K."/>
            <person name="Hindelang C."/>
            <person name="Sassone-Corsi P."/>
        </authorList>
    </citation>
    <scope>CHARACTERIZATION OF VARIANTS AHC PRO-267; VAL-269 DEL AND ILE-440</scope>
</reference>
<reference key="23">
    <citation type="journal article" date="2001" name="Hum. Mutat.">
        <title>Nine novel mutations in NR0B1 (DAX1) causing adrenal hypoplasia congenita.</title>
        <authorList>
            <person name="Zhang Y.H."/>
            <person name="Huang B.L."/>
            <person name="Anyane-Yeboa K."/>
            <person name="Carvalho J.A."/>
            <person name="Clemons R.D."/>
            <person name="Cole T."/>
            <person name="De Figueiredo B.C."/>
            <person name="Lubinsky M."/>
            <person name="Metzger D.L."/>
            <person name="Quadrelli R."/>
            <person name="Repaske D.R."/>
            <person name="Reyno S."/>
            <person name="Seaver L.H."/>
            <person name="Vaglio A."/>
            <person name="van Vliet G."/>
            <person name="McCabe L.L."/>
            <person name="McCabe E.R.B."/>
            <person name="Phelan J.K."/>
        </authorList>
    </citation>
    <scope>VARIANTS AHC PRO-295 AND THR-425</scope>
</reference>
<reference key="24">
    <citation type="journal article" date="2001" name="J. Clin. Endocrinol. Metab.">
        <title>Missense mutations cluster within the carboxyl-terminal region of DAX-1 and impair transcriptional repression.</title>
        <authorList>
            <person name="Achermann J.C."/>
            <person name="Ito M."/>
            <person name="Silverman B.L."/>
            <person name="Habiby R.L."/>
            <person name="Pang S."/>
            <person name="Rosler A."/>
            <person name="Jameson J.L."/>
        </authorList>
    </citation>
    <scope>VARIANTS AHC PRO-300 AND LYS-377</scope>
    <scope>CHARACTERIZATION OF VARIANTS</scope>
</reference>
<reference key="25">
    <citation type="journal article" date="2002" name="J. Clin. Endocrinol. Metab.">
        <title>Hypogonadotropic hypogonadism as a presenting feature of late-onset X-linked adrenal hypoplasia congenita.</title>
        <authorList>
            <person name="Mantovani G."/>
            <person name="Ozisik G."/>
            <person name="Achermann J.C."/>
            <person name="Romoli R."/>
            <person name="Borretta G."/>
            <person name="Persani L."/>
            <person name="Spada A."/>
            <person name="Jameson J.L."/>
            <person name="Beck-Peccoz P."/>
        </authorList>
    </citation>
    <scope>VARIANT AHC ASP-380</scope>
</reference>
<reference key="26">
    <citation type="journal article" date="2003" name="J. Clin. Endocrinol. Metab.">
        <title>Identification of a novel missense mutation that is as damaging to DAX-1 repressor function as a nonsense mutation.</title>
        <authorList>
            <person name="Brown P."/>
            <person name="Scobie G.A."/>
            <person name="Townsend J."/>
            <person name="Bayne R.A.L."/>
            <person name="Seckl J.R."/>
            <person name="Saunders P.T.K."/>
            <person name="Anderson R.A."/>
        </authorList>
    </citation>
    <scope>VARIANT AHC PRO-297</scope>
    <scope>CHARACTERIZATION OF VARIANT AHC PRO-297</scope>
</reference>
<reference key="27">
    <citation type="journal article" date="2005" name="Am. J. Med. Genet. A">
        <title>Inappropriate tall stature and renal ectopy in a male patient with X-linked congenital adrenal hypoplasia due to a novel missense mutation in the DAX-1 gene.</title>
        <authorList>
            <person name="Franzese A."/>
            <person name="Brunetti-Pierri N."/>
            <person name="Spagnuolo M.I."/>
            <person name="Spadaro R."/>
            <person name="Giugliano M."/>
            <person name="Mukai T."/>
            <person name="Valerio G."/>
        </authorList>
    </citation>
    <scope>VARIANT AHC GLY-287</scope>
</reference>
<reference key="28">
    <citation type="journal article" date="2005" name="Am. J. Med. Genet. A">
        <authorList>
            <person name="Franzese A."/>
            <person name="Brunetti-Pierri N."/>
            <person name="Spagnuolo M.I."/>
            <person name="Spadaro R."/>
            <person name="Giugliano M."/>
            <person name="Mukai T."/>
            <person name="Valerio G."/>
        </authorList>
    </citation>
    <scope>ERRATUM OF PUBMED:15800903</scope>
</reference>
<accession>P51843</accession>
<accession>Q96F69</accession>
<comment type="function">
    <text evidence="1 12 17 18 20">Nuclear receptor that lacks a DNA-binding domain and acts as a corepressor that inhibits the transcriptional activity of other nuclear receptors through heterodimeric interactions (PubMed:12482977, PubMed:32433991). Component of a cascade required for the development of the hypothalamic-pituitary-adrenal-gonadal axis (PubMed:7990953, PubMed:8675564). May also have a role in the development of the embryo and in the maintenance of embryonic stem cell pluripotency (By similarity).</text>
</comment>
<comment type="subunit">
    <text evidence="1 6 12 15 16 17">Homodimer (PubMed:16709599). Interacts with NR5A1, NR5A2, NR0B2 and with COPS2 (PubMed:10713076, PubMed:12482977, PubMed:16709599, PubMed:26416531, PubMed:32433991). Interacts with ESRRB; represses ESRRB activity at the GATA6 promoter (By similarity).</text>
</comment>
<comment type="interaction">
    <interactant intactId="EBI-946109">
        <id>P51843</id>
    </interactant>
    <interactant intactId="EBI-747840">
        <id>Q96G04</id>
        <label>EEF2KMT</label>
    </interactant>
    <organismsDiffer>false</organismsDiffer>
    <experiments>3</experiments>
</comment>
<comment type="interaction">
    <interactant intactId="EBI-946109">
        <id>P51843</id>
    </interactant>
    <interactant intactId="EBI-2834260">
        <id>P62508</id>
        <label>ESRRG</label>
    </interactant>
    <organismsDiffer>false</organismsDiffer>
    <experiments>3</experiments>
</comment>
<comment type="interaction">
    <interactant intactId="EBI-946109">
        <id>P51843</id>
    </interactant>
    <interactant intactId="EBI-12001340">
        <id>P62508-3</id>
        <label>ESRRG</label>
    </interactant>
    <organismsDiffer>false</organismsDiffer>
    <experiments>6</experiments>
</comment>
<comment type="interaction">
    <interactant intactId="EBI-946109">
        <id>P51843</id>
    </interactant>
    <interactant intactId="EBI-874629">
        <id>Q13285</id>
        <label>NR5A1</label>
    </interactant>
    <organismsDiffer>false</organismsDiffer>
    <experiments>9</experiments>
</comment>
<comment type="interaction">
    <interactant intactId="EBI-946109">
        <id>P51843</id>
    </interactant>
    <interactant intactId="EBI-748689">
        <id>P35398</id>
        <label>RORA</label>
    </interactant>
    <organismsDiffer>false</organismsDiffer>
    <experiments>2</experiments>
</comment>
<comment type="subcellular location">
    <subcellularLocation>
        <location evidence="15">Nucleus</location>
    </subcellularLocation>
    <subcellularLocation>
        <location evidence="15">Cytoplasm</location>
    </subcellularLocation>
    <text evidence="15">Shuttles between the cytoplasm and nucleus. Homodimers exits in the cytoplasm and in the nucleus.</text>
</comment>
<comment type="alternative products">
    <event type="alternative splicing"/>
    <isoform>
        <id>P51843-1</id>
        <name>1</name>
        <sequence type="displayed"/>
    </isoform>
    <isoform>
        <id>P51843-2</id>
        <name>2</name>
        <name>NR0B1A</name>
        <sequence type="described" ref="VSP_023557 VSP_023558"/>
    </isoform>
</comment>
<comment type="domain">
    <text evidence="15">Homodimerization involved an interaction between amino and carboxy termini involving LXXLL motifs and steroid binding domain (AF-2 motif). Heterodimerizes with NR5A1 and NROB2 through its N-terminal LXXLL motifs.</text>
</comment>
<comment type="disease" evidence="3 4 5 7 8 9 10 11 13 14 19 21 22 23 24 26">
    <disease id="DI-02426">
        <name>Adrenal hypoplasia, congenital</name>
        <acronym>AHC</acronym>
        <description>A disorder of adrenal gland development characterized by absence of the permanent zone of the adrenal cortex, structural disorganization of the adrenal glands, adrenal insufficiency and profound hormonal deficiencies. AHC patients manifest primary adrenal failure usually in early infancy, and hypogonadotropic hypogonadism leading to absent or incomplete sexual maturation. AHC can be inherited in an X-linked or autosomal recessive pattern.</description>
        <dbReference type="MIM" id="300200"/>
    </disease>
    <text>The disease is caused by variants affecting the gene represented in this entry.</text>
</comment>
<comment type="disease" evidence="25">
    <disease id="DI-02751">
        <name>46,XY sex reversal 2</name>
        <acronym>SRXY2</acronym>
        <description>A condition characterized by male-to-female sex reversal in the presence of a normal 46,XY karyotype.</description>
        <dbReference type="MIM" id="300018"/>
    </disease>
    <text>The disease is caused by variants affecting the gene represented in this entry. XY individuals with a duplication of part of the short arm of the X chromosome and an intact SRY gene develop as females. The single X chromosome in these individuals does not undergo X-chromosome inactivation; therefore, these individuals presumably carry 2 active copies of genes, including the NR0B1 gene, in the duplicated region. Individuals with deletion of this region develop as males. Genes within the dosage-sensitive sex reversal region are, therefore, not essential for testis development, but, when present in a double dose, interfere with testis formation.</text>
</comment>
<comment type="miscellaneous">
    <molecule>Isoform 2</molecule>
    <text evidence="28">More abundant than isoform 1 in all tissues tested except testis where they are nearly equal.</text>
</comment>
<comment type="similarity">
    <text evidence="28">Belongs to the nuclear hormone receptor family. NR0 subfamily.</text>
</comment>
<sequence>MAGENHQWQGSILYNMLMSAKQTRAAPEAPETRLVDQCWGCSCGDEPGVGREGLLGGRNVALLYRCCFCGKDHPRQGSILYSMLTSAKQTYAAPKAPEATLGPCWGCSCGSDPGVGRAGLPGGRPVALLYRCCFCGEDHPRQGSILYSLLTSSKQTHVAPAAPEARPGGAWWDRSYFAQRPGGKEALPGGRATALLYRCCFCGEDHPQQGSTLYCVPTSTNQAQAAPEERPRAPWWDTSSGALRPVALKSPQVVCEAASAGLLKTLRFVKYLPCFQVLPLDQQLVLVRNCWASLLMLELAQDRLQFETVEVSEPSMLQKILTTRRRETGGNEPLPVPTLQHHLAPPAEARKVPSASQVQAIKCFLSKCWSLNISTKEYAYLKGTVLFNPDVPGLQCVKYIQGLQWGTQQILSEHTRMTHQGPHDRFIELNSTLFLLRFINANVIAELFFRPIIGTVSMDDMMLEMLCTKI</sequence>
<evidence type="ECO:0000250" key="1">
    <source>
        <dbReference type="UniProtKB" id="Q61066"/>
    </source>
</evidence>
<evidence type="ECO:0000255" key="2">
    <source>
        <dbReference type="PROSITE-ProRule" id="PRU01189"/>
    </source>
</evidence>
<evidence type="ECO:0000269" key="3">
    <source>
    </source>
</evidence>
<evidence type="ECO:0000269" key="4">
    <source>
    </source>
</evidence>
<evidence type="ECO:0000269" key="5">
    <source>
    </source>
</evidence>
<evidence type="ECO:0000269" key="6">
    <source>
    </source>
</evidence>
<evidence type="ECO:0000269" key="7">
    <source>
    </source>
</evidence>
<evidence type="ECO:0000269" key="8">
    <source>
    </source>
</evidence>
<evidence type="ECO:0000269" key="9">
    <source>
    </source>
</evidence>
<evidence type="ECO:0000269" key="10">
    <source>
    </source>
</evidence>
<evidence type="ECO:0000269" key="11">
    <source>
    </source>
</evidence>
<evidence type="ECO:0000269" key="12">
    <source>
    </source>
</evidence>
<evidence type="ECO:0000269" key="13">
    <source>
    </source>
</evidence>
<evidence type="ECO:0000269" key="14">
    <source>
    </source>
</evidence>
<evidence type="ECO:0000269" key="15">
    <source>
    </source>
</evidence>
<evidence type="ECO:0000269" key="16">
    <source>
    </source>
</evidence>
<evidence type="ECO:0000269" key="17">
    <source>
    </source>
</evidence>
<evidence type="ECO:0000269" key="18">
    <source>
    </source>
</evidence>
<evidence type="ECO:0000269" key="19">
    <source>
    </source>
</evidence>
<evidence type="ECO:0000269" key="20">
    <source>
    </source>
</evidence>
<evidence type="ECO:0000269" key="21">
    <source>
    </source>
</evidence>
<evidence type="ECO:0000269" key="22">
    <source>
    </source>
</evidence>
<evidence type="ECO:0000269" key="23">
    <source>
    </source>
</evidence>
<evidence type="ECO:0000269" key="24">
    <source>
    </source>
</evidence>
<evidence type="ECO:0000269" key="25">
    <source>
    </source>
</evidence>
<evidence type="ECO:0000269" key="26">
    <source>
    </source>
</evidence>
<evidence type="ECO:0000303" key="27">
    <source>
    </source>
</evidence>
<evidence type="ECO:0000305" key="28"/>
<evidence type="ECO:0007744" key="29">
    <source>
        <dbReference type="PDB" id="4RWV"/>
    </source>
</evidence>
<evidence type="ECO:0007829" key="30">
    <source>
        <dbReference type="PDB" id="4RWV"/>
    </source>
</evidence>
<keyword id="KW-0002">3D-structure</keyword>
<keyword id="KW-0025">Alternative splicing</keyword>
<keyword id="KW-0963">Cytoplasm</keyword>
<keyword id="KW-0225">Disease variant</keyword>
<keyword id="KW-0539">Nucleus</keyword>
<keyword id="KW-1267">Proteomics identification</keyword>
<keyword id="KW-0675">Receptor</keyword>
<keyword id="KW-1185">Reference proteome</keyword>
<keyword id="KW-0677">Repeat</keyword>
<keyword id="KW-0678">Repressor</keyword>
<keyword id="KW-0804">Transcription</keyword>
<keyword id="KW-0805">Transcription regulation</keyword>
<organism>
    <name type="scientific">Homo sapiens</name>
    <name type="common">Human</name>
    <dbReference type="NCBI Taxonomy" id="9606"/>
    <lineage>
        <taxon>Eukaryota</taxon>
        <taxon>Metazoa</taxon>
        <taxon>Chordata</taxon>
        <taxon>Craniata</taxon>
        <taxon>Vertebrata</taxon>
        <taxon>Euteleostomi</taxon>
        <taxon>Mammalia</taxon>
        <taxon>Eutheria</taxon>
        <taxon>Euarchontoglires</taxon>
        <taxon>Primates</taxon>
        <taxon>Haplorrhini</taxon>
        <taxon>Catarrhini</taxon>
        <taxon>Hominidae</taxon>
        <taxon>Homo</taxon>
    </lineage>
</organism>
<gene>
    <name type="primary">NR0B1</name>
    <name type="synonym">AHC</name>
    <name evidence="27" type="synonym">DAX1</name>
</gene>
<name>NR0B1_HUMAN</name>
<feature type="chain" id="PRO_0000053748" description="Nuclear receptor subfamily 0 group B member 1">
    <location>
        <begin position="1"/>
        <end position="470"/>
    </location>
</feature>
<feature type="repeat" description="1">
    <location>
        <begin position="1"/>
        <end position="67"/>
    </location>
</feature>
<feature type="repeat" description="2">
    <location>
        <begin position="68"/>
        <end position="133"/>
    </location>
</feature>
<feature type="repeat" description="3">
    <location>
        <begin position="134"/>
        <end position="200"/>
    </location>
</feature>
<feature type="repeat" description="4; truncated">
    <location>
        <begin position="201"/>
        <end position="253"/>
    </location>
</feature>
<feature type="domain" description="NR LBD" evidence="2">
    <location>
        <begin position="205"/>
        <end position="469"/>
    </location>
</feature>
<feature type="region of interest" description="4 X 67 AA tandem repeats">
    <location>
        <begin position="1"/>
        <end position="253"/>
    </location>
</feature>
<feature type="short sequence motif" description="LXXLL motif 1">
    <location>
        <begin position="13"/>
        <end position="17"/>
    </location>
</feature>
<feature type="short sequence motif" description="LXXLL motif 2">
    <location>
        <begin position="80"/>
        <end position="84"/>
    </location>
</feature>
<feature type="short sequence motif" description="LXXLL motif 3">
    <location>
        <begin position="146"/>
        <end position="150"/>
    </location>
</feature>
<feature type="short sequence motif" description="AF-2 motif">
    <location>
        <begin position="461"/>
        <end position="466"/>
    </location>
</feature>
<feature type="splice variant" id="VSP_023557" description="In isoform 2." evidence="28">
    <original>DVPGLQCVKYI</original>
    <variation>GKGKENDCNHH</variation>
    <location>
        <begin position="390"/>
        <end position="400"/>
    </location>
</feature>
<feature type="splice variant" id="VSP_023558" description="In isoform 2." evidence="28">
    <location>
        <begin position="401"/>
        <end position="470"/>
    </location>
</feature>
<feature type="sequence variant" id="VAR_004738" description="In AHC; impairs transcriptional silencing of the StAR promoter; dbSNP:rs104894888." evidence="7 19 24">
    <original>R</original>
    <variation>P</variation>
    <location>
        <position position="267"/>
    </location>
</feature>
<feature type="sequence variant" id="VAR_004739" description="In AHC; impairs transcriptional silencing of the StAR promoter." evidence="7 19 24">
    <location>
        <position position="269"/>
    </location>
</feature>
<feature type="sequence variant" id="VAR_031079" description="In AHC." evidence="4">
    <original>L</original>
    <variation>P</variation>
    <location>
        <position position="278"/>
    </location>
</feature>
<feature type="sequence variant" id="VAR_004740" description="In AHC; the patient presents an inappropriate tall stature and renal ectopy." evidence="14">
    <original>V</original>
    <variation>G</variation>
    <location>
        <position position="287"/>
    </location>
</feature>
<feature type="sequence variant" id="VAR_031080" description="In AHC; dbSNP:rs28935482." evidence="23">
    <original>W</original>
    <variation>C</variation>
    <location>
        <position position="291"/>
    </location>
</feature>
<feature type="sequence variant" id="VAR_018303" description="In AHC." evidence="10">
    <original>L</original>
    <variation>P</variation>
    <location>
        <position position="295"/>
    </location>
</feature>
<feature type="sequence variant" id="VAR_031081" description="In AHC; results in a severe loss of repressor activity; dbSNP:rs104894907." evidence="13">
    <original>L</original>
    <variation>P</variation>
    <location>
        <position position="297"/>
    </location>
</feature>
<feature type="sequence variant" id="VAR_018304" description="In AHC." evidence="9">
    <original>A</original>
    <variation>P</variation>
    <location>
        <position position="300"/>
    </location>
</feature>
<feature type="sequence variant" id="VAR_004741" description="In AHC." evidence="22">
    <original>A</original>
    <variation>V</variation>
    <location>
        <position position="300"/>
    </location>
</feature>
<feature type="sequence variant" id="VAR_004742" description="In AHC." evidence="9 26">
    <original>E</original>
    <variation>K</variation>
    <location>
        <position position="377"/>
    </location>
</feature>
<feature type="sequence variant" id="VAR_018300" description="In AHC; dbSNP:rs104894900." evidence="11">
    <original>Y</original>
    <variation>D</variation>
    <location>
        <position position="380"/>
    </location>
</feature>
<feature type="sequence variant" id="VAR_018301" description="In AHC; dbSNP:rs104894899." evidence="8">
    <original>L</original>
    <variation>H</variation>
    <location>
        <position position="381"/>
    </location>
</feature>
<feature type="sequence variant" id="VAR_004743" description="In AHC; dbSNP:rs104894896." evidence="23">
    <original>K</original>
    <variation>N</variation>
    <location>
        <position position="382"/>
    </location>
</feature>
<feature type="sequence variant" id="VAR_004744" description="In AHC." evidence="26">
    <original>V</original>
    <variation>G</variation>
    <location>
        <position position="385"/>
    </location>
</feature>
<feature type="sequence variant" id="VAR_004745" description="In AHC." evidence="26">
    <original>R</original>
    <variation>G</variation>
    <location>
        <position position="425"/>
    </location>
</feature>
<feature type="sequence variant" id="VAR_018305" description="In AHC." evidence="10">
    <original>R</original>
    <variation>T</variation>
    <location>
        <position position="425"/>
    </location>
</feature>
<feature type="sequence variant" id="VAR_018302" description="In AHC; mild phenotype; dbSNP:rs104894897." evidence="5">
    <original>I</original>
    <variation>S</variation>
    <location>
        <position position="439"/>
    </location>
</feature>
<feature type="sequence variant" id="VAR_004746" description="In AHC; impairs RNA-binding activity; dbSNP:rs28935481." evidence="7 21">
    <original>N</original>
    <variation>I</variation>
    <location>
        <position position="440"/>
    </location>
</feature>
<feature type="sequence variant" id="VAR_018306" description="In AHC." evidence="3">
    <original>L</original>
    <variation>R</variation>
    <location>
        <position position="466"/>
    </location>
</feature>
<feature type="mutagenesis site" description="Strongly reduces homodimerization and interaction with NR0B2." evidence="15">
    <original>ML</original>
    <variation>AA</variation>
    <location>
        <begin position="16"/>
        <end position="17"/>
    </location>
</feature>
<feature type="mutagenesis site" description="Strongly reduces homodimerization and interaction with NR0B2." evidence="15">
    <original>ML</original>
    <variation>AA</variation>
    <location>
        <begin position="83"/>
        <end position="84"/>
    </location>
</feature>
<feature type="mutagenesis site" description="Strongly reduces homodimerization and interaction with NR0B2." evidence="15">
    <original>LL</original>
    <variation>AA</variation>
    <location>
        <begin position="149"/>
        <end position="150"/>
    </location>
</feature>
<feature type="mutagenesis site" description="Strongly reduces homodimerization and interaction with NR0B2." evidence="15">
    <original>MM</original>
    <variation>AA</variation>
    <location>
        <begin position="461"/>
        <end position="462"/>
    </location>
</feature>
<feature type="sequence conflict" description="In Ref. 2; AAC13875." evidence="28" ref="2">
    <original>E</original>
    <variation>Q</variation>
    <location>
        <position position="4"/>
    </location>
</feature>
<feature type="helix" evidence="30">
    <location>
        <begin position="145"/>
        <end position="151"/>
    </location>
</feature>